<feature type="chain" id="PRO_1000134672" description="Undecaprenyl-diphosphatase">
    <location>
        <begin position="1"/>
        <end position="272"/>
    </location>
</feature>
<feature type="transmembrane region" description="Helical" evidence="1">
    <location>
        <begin position="4"/>
        <end position="24"/>
    </location>
</feature>
<feature type="transmembrane region" description="Helical" evidence="1">
    <location>
        <begin position="43"/>
        <end position="63"/>
    </location>
</feature>
<feature type="transmembrane region" description="Helical" evidence="1">
    <location>
        <begin position="86"/>
        <end position="106"/>
    </location>
</feature>
<feature type="transmembrane region" description="Helical" evidence="1">
    <location>
        <begin position="109"/>
        <end position="129"/>
    </location>
</feature>
<feature type="transmembrane region" description="Helical" evidence="1">
    <location>
        <begin position="145"/>
        <end position="165"/>
    </location>
</feature>
<feature type="transmembrane region" description="Helical" evidence="1">
    <location>
        <begin position="186"/>
        <end position="206"/>
    </location>
</feature>
<feature type="transmembrane region" description="Helical" evidence="1">
    <location>
        <begin position="222"/>
        <end position="242"/>
    </location>
</feature>
<feature type="transmembrane region" description="Helical" evidence="1">
    <location>
        <begin position="249"/>
        <end position="269"/>
    </location>
</feature>
<name>UPPP_ACIB5</name>
<protein>
    <recommendedName>
        <fullName evidence="1">Undecaprenyl-diphosphatase</fullName>
        <ecNumber evidence="1">3.6.1.27</ecNumber>
    </recommendedName>
    <alternativeName>
        <fullName evidence="1">Bacitracin resistance protein</fullName>
    </alternativeName>
    <alternativeName>
        <fullName evidence="1">Undecaprenyl pyrophosphate phosphatase</fullName>
    </alternativeName>
</protein>
<organism>
    <name type="scientific">Acinetobacter baumannii (strain AB0057)</name>
    <dbReference type="NCBI Taxonomy" id="480119"/>
    <lineage>
        <taxon>Bacteria</taxon>
        <taxon>Pseudomonadati</taxon>
        <taxon>Pseudomonadota</taxon>
        <taxon>Gammaproteobacteria</taxon>
        <taxon>Moraxellales</taxon>
        <taxon>Moraxellaceae</taxon>
        <taxon>Acinetobacter</taxon>
        <taxon>Acinetobacter calcoaceticus/baumannii complex</taxon>
    </lineage>
</organism>
<comment type="function">
    <text evidence="1">Catalyzes the dephosphorylation of undecaprenyl diphosphate (UPP). Confers resistance to bacitracin.</text>
</comment>
<comment type="catalytic activity">
    <reaction evidence="1">
        <text>di-trans,octa-cis-undecaprenyl diphosphate + H2O = di-trans,octa-cis-undecaprenyl phosphate + phosphate + H(+)</text>
        <dbReference type="Rhea" id="RHEA:28094"/>
        <dbReference type="ChEBI" id="CHEBI:15377"/>
        <dbReference type="ChEBI" id="CHEBI:15378"/>
        <dbReference type="ChEBI" id="CHEBI:43474"/>
        <dbReference type="ChEBI" id="CHEBI:58405"/>
        <dbReference type="ChEBI" id="CHEBI:60392"/>
        <dbReference type="EC" id="3.6.1.27"/>
    </reaction>
</comment>
<comment type="subcellular location">
    <subcellularLocation>
        <location evidence="1">Cell inner membrane</location>
        <topology evidence="1">Multi-pass membrane protein</topology>
    </subcellularLocation>
</comment>
<comment type="miscellaneous">
    <text>Bacitracin is thought to be involved in the inhibition of peptidoglycan synthesis by sequestering undecaprenyl diphosphate, thereby reducing the pool of lipid carrier available.</text>
</comment>
<comment type="similarity">
    <text evidence="1">Belongs to the UppP family.</text>
</comment>
<reference key="1">
    <citation type="journal article" date="2008" name="J. Bacteriol.">
        <title>Comparative genome sequence analysis of multidrug-resistant Acinetobacter baumannii.</title>
        <authorList>
            <person name="Adams M.D."/>
            <person name="Goglin K."/>
            <person name="Molyneaux N."/>
            <person name="Hujer K.M."/>
            <person name="Lavender H."/>
            <person name="Jamison J.J."/>
            <person name="MacDonald I.J."/>
            <person name="Martin K.M."/>
            <person name="Russo T."/>
            <person name="Campagnari A.A."/>
            <person name="Hujer A.M."/>
            <person name="Bonomo R.A."/>
            <person name="Gill S.R."/>
        </authorList>
    </citation>
    <scope>NUCLEOTIDE SEQUENCE [LARGE SCALE GENOMIC DNA]</scope>
    <source>
        <strain>AB0057</strain>
    </source>
</reference>
<gene>
    <name evidence="1" type="primary">uppP</name>
    <name type="ordered locus">AB57_3268</name>
</gene>
<proteinExistence type="inferred from homology"/>
<sequence length="272" mass="29506">MENFEVIKALFLGFVEGLTEFLPISSTGHLILFGHIIDFHSDGGRVFEVVIQLGAILAVCWLYRQKIINLIKGFFSGDVESRHFAISVLIAFSPAVIIGVLAVDFIKSVLFSPIVVAIALIVGALIIFWVESKQFEHKTDDATKITFKQALLVGLAQCVAMIPGTSRSGATIVGGMFAGLSRKAATEFSFFLAMPTMLGAATFDLIKNADVLTSDNMVNIGVGFVAAFIAALLVVKALVLFVERHTLRVFAWYRIVLGVIILIAAMFFNLSA</sequence>
<accession>B7I7L7</accession>
<dbReference type="EC" id="3.6.1.27" evidence="1"/>
<dbReference type="EMBL" id="CP001182">
    <property type="protein sequence ID" value="ACJ41849.1"/>
    <property type="molecule type" value="Genomic_DNA"/>
</dbReference>
<dbReference type="RefSeq" id="WP_000426935.1">
    <property type="nucleotide sequence ID" value="NC_011586.2"/>
</dbReference>
<dbReference type="SMR" id="B7I7L7"/>
<dbReference type="KEGG" id="abn:AB57_3268"/>
<dbReference type="HOGENOM" id="CLU_060296_2_0_6"/>
<dbReference type="Proteomes" id="UP000007094">
    <property type="component" value="Chromosome"/>
</dbReference>
<dbReference type="GO" id="GO:0005886">
    <property type="term" value="C:plasma membrane"/>
    <property type="evidence" value="ECO:0007669"/>
    <property type="project" value="UniProtKB-SubCell"/>
</dbReference>
<dbReference type="GO" id="GO:0050380">
    <property type="term" value="F:undecaprenyl-diphosphatase activity"/>
    <property type="evidence" value="ECO:0007669"/>
    <property type="project" value="UniProtKB-UniRule"/>
</dbReference>
<dbReference type="GO" id="GO:0071555">
    <property type="term" value="P:cell wall organization"/>
    <property type="evidence" value="ECO:0007669"/>
    <property type="project" value="UniProtKB-KW"/>
</dbReference>
<dbReference type="GO" id="GO:0009252">
    <property type="term" value="P:peptidoglycan biosynthetic process"/>
    <property type="evidence" value="ECO:0007669"/>
    <property type="project" value="UniProtKB-KW"/>
</dbReference>
<dbReference type="GO" id="GO:0008360">
    <property type="term" value="P:regulation of cell shape"/>
    <property type="evidence" value="ECO:0007669"/>
    <property type="project" value="UniProtKB-KW"/>
</dbReference>
<dbReference type="GO" id="GO:0046677">
    <property type="term" value="P:response to antibiotic"/>
    <property type="evidence" value="ECO:0007669"/>
    <property type="project" value="UniProtKB-UniRule"/>
</dbReference>
<dbReference type="HAMAP" id="MF_01006">
    <property type="entry name" value="Undec_diphosphatase"/>
    <property type="match status" value="1"/>
</dbReference>
<dbReference type="InterPro" id="IPR003824">
    <property type="entry name" value="UppP"/>
</dbReference>
<dbReference type="NCBIfam" id="NF001389">
    <property type="entry name" value="PRK00281.1-2"/>
    <property type="match status" value="1"/>
</dbReference>
<dbReference type="NCBIfam" id="NF001390">
    <property type="entry name" value="PRK00281.1-4"/>
    <property type="match status" value="1"/>
</dbReference>
<dbReference type="NCBIfam" id="TIGR00753">
    <property type="entry name" value="undec_PP_bacA"/>
    <property type="match status" value="1"/>
</dbReference>
<dbReference type="PANTHER" id="PTHR30622">
    <property type="entry name" value="UNDECAPRENYL-DIPHOSPHATASE"/>
    <property type="match status" value="1"/>
</dbReference>
<dbReference type="PANTHER" id="PTHR30622:SF3">
    <property type="entry name" value="UNDECAPRENYL-DIPHOSPHATASE"/>
    <property type="match status" value="1"/>
</dbReference>
<dbReference type="Pfam" id="PF02673">
    <property type="entry name" value="BacA"/>
    <property type="match status" value="1"/>
</dbReference>
<keyword id="KW-0046">Antibiotic resistance</keyword>
<keyword id="KW-0997">Cell inner membrane</keyword>
<keyword id="KW-1003">Cell membrane</keyword>
<keyword id="KW-0133">Cell shape</keyword>
<keyword id="KW-0961">Cell wall biogenesis/degradation</keyword>
<keyword id="KW-0378">Hydrolase</keyword>
<keyword id="KW-0472">Membrane</keyword>
<keyword id="KW-0573">Peptidoglycan synthesis</keyword>
<keyword id="KW-0812">Transmembrane</keyword>
<keyword id="KW-1133">Transmembrane helix</keyword>
<evidence type="ECO:0000255" key="1">
    <source>
        <dbReference type="HAMAP-Rule" id="MF_01006"/>
    </source>
</evidence>